<protein>
    <recommendedName>
        <fullName>Capsid protein</fullName>
        <shortName>CP</shortName>
    </recommendedName>
    <alternativeName>
        <fullName>Coat protein</fullName>
    </alternativeName>
</protein>
<name>CAPSD_AHV2H</name>
<sequence length="652" mass="73670">MSSNDSAQTRNLQEERFNERTSTPTVVTAVLPDTNGPTTNSTSGSVGPPHPTPNVPVPTQSSSDPPSASGIFAKEIDLPRNVIQHSGNKFILDVVPDSRFPTFAITEFVQRSFSNFTFEQYSYVSPASLVGYLVYMIHAFVFLVDAFERSPMSAYASEIDASHAYLRIIDAFSDAYIPDFLFEILDTYLSHRLDIRSKLEMNVSYGSVLYKYDAPRIVAPSIFLLAHNQLISQSRESTAYEKWLDSIVIHYSRAVIRVGNLVGGLYQSSHGSTTTHFTYRNWFARSLSRLADSATHRTHLRRPMISEFDYNIPSVNNNTYNPYVHLLMLEPNNRNITLDFIRSLSSFCSTELKATRTLRDHISRRSAAISRCVIKGPEAPTWHSSPLDDLKEKSKQGNFSQFCEVAKFGLPRKENSESYTFKFPKDASTIDTAFYLIQENGRSSVLDPTTADEELHTEGMNLLFDPYDDESSAHYATVLSGKLIQNSNIDGETLLLPDPTTGLARTNSRYLQGSVLIRNVLPEFDQHEIRLFPRYPQISRLSASLTLLFNMRQVWIPRFKQKVDEQPKLSNFSWNEGCDGTVPSLNVVTAESSTNGPAAEQQVILWSSYRHVSNSDRPTVDTVYYYSTLELLFGTRSSMMQTYNLHQLLSLH</sequence>
<comment type="function">
    <text evidence="1">The capsid protein self-assembles to form an icosahedral capsid with a T=2 symmetry made of 120 subunits.</text>
</comment>
<comment type="subcellular location">
    <subcellularLocation>
        <location evidence="3">Virion</location>
    </subcellularLocation>
</comment>
<accession>Q85056</accession>
<keyword id="KW-0167">Capsid protein</keyword>
<keyword id="KW-1185">Reference proteome</keyword>
<keyword id="KW-0946">Virion</keyword>
<reference key="1">
    <citation type="journal article" date="1995" name="J. Gen. Virol.">
        <title>Genome organization of a partitivirus from the filamentous ascomycete Atkinsonella hypoxylon.</title>
        <authorList>
            <person name="Oh C.S."/>
            <person name="Hillman B.I."/>
        </authorList>
    </citation>
    <scope>NUCLEOTIDE SEQUENCE [GENOMIC RNA]</scope>
</reference>
<feature type="chain" id="PRO_0000402791" description="Capsid protein">
    <location>
        <begin position="1"/>
        <end position="652"/>
    </location>
</feature>
<feature type="region of interest" description="Disordered" evidence="2">
    <location>
        <begin position="1"/>
        <end position="70"/>
    </location>
</feature>
<feature type="compositionally biased region" description="Polar residues" evidence="2">
    <location>
        <begin position="1"/>
        <end position="11"/>
    </location>
</feature>
<feature type="compositionally biased region" description="Low complexity" evidence="2">
    <location>
        <begin position="34"/>
        <end position="47"/>
    </location>
</feature>
<evidence type="ECO:0000250" key="1"/>
<evidence type="ECO:0000256" key="2">
    <source>
        <dbReference type="SAM" id="MobiDB-lite"/>
    </source>
</evidence>
<evidence type="ECO:0000305" key="3"/>
<dbReference type="EMBL" id="L39126">
    <property type="protein sequence ID" value="AAA61830.1"/>
    <property type="molecule type" value="Genomic_RNA"/>
</dbReference>
<dbReference type="RefSeq" id="NP_604476.1">
    <property type="nucleotide sequence ID" value="NC_003471.1"/>
</dbReference>
<dbReference type="GeneID" id="991190"/>
<dbReference type="KEGG" id="vg:991190"/>
<dbReference type="Proteomes" id="UP000001673">
    <property type="component" value="Genome"/>
</dbReference>
<dbReference type="GO" id="GO:0019028">
    <property type="term" value="C:viral capsid"/>
    <property type="evidence" value="ECO:0007669"/>
    <property type="project" value="UniProtKB-KW"/>
</dbReference>
<organism>
    <name type="scientific">Atkinsonella hypoxylon virus (isolate 2H)</name>
    <name type="common">AhV</name>
    <dbReference type="NCBI Taxonomy" id="647331"/>
    <lineage>
        <taxon>Viruses</taxon>
        <taxon>Riboviria</taxon>
        <taxon>Orthornavirae</taxon>
        <taxon>Pisuviricota</taxon>
        <taxon>Duplopiviricetes</taxon>
        <taxon>Durnavirales</taxon>
        <taxon>Partitiviridae</taxon>
        <taxon>Betapartitivirus</taxon>
        <taxon>Atkinsonella hypoxylon virus</taxon>
    </lineage>
</organism>
<proteinExistence type="inferred from homology"/>
<organismHost>
    <name type="scientific">Atkinsonella hypoxylon</name>
    <dbReference type="NCBI Taxonomy" id="47741"/>
</organismHost>